<name>HRTB_STAA8</name>
<reference key="1">
    <citation type="book" date="2006" name="Gram positive pathogens, 2nd edition">
        <title>The Staphylococcus aureus NCTC 8325 genome.</title>
        <editorList>
            <person name="Fischetti V."/>
            <person name="Novick R."/>
            <person name="Ferretti J."/>
            <person name="Portnoy D."/>
            <person name="Rood J."/>
        </editorList>
        <authorList>
            <person name="Gillaspy A.F."/>
            <person name="Worrell V."/>
            <person name="Orvis J."/>
            <person name="Roe B.A."/>
            <person name="Dyer D.W."/>
            <person name="Iandolo J.J."/>
        </authorList>
    </citation>
    <scope>NUCLEOTIDE SEQUENCE [LARGE SCALE GENOMIC DNA]</scope>
    <source>
        <strain>NCTC 8325 / PS 47</strain>
    </source>
</reference>
<accession>Q2FVR0</accession>
<feature type="chain" id="PRO_0000270522" description="Putative hemin transport system permease protein HrtB">
    <location>
        <begin position="1"/>
        <end position="351"/>
    </location>
</feature>
<feature type="transmembrane region" description="Helical" evidence="2">
    <location>
        <begin position="16"/>
        <end position="36"/>
    </location>
</feature>
<feature type="transmembrane region" description="Helical" evidence="2">
    <location>
        <begin position="234"/>
        <end position="254"/>
    </location>
</feature>
<feature type="transmembrane region" description="Helical" evidence="2">
    <location>
        <begin position="281"/>
        <end position="301"/>
    </location>
</feature>
<feature type="transmembrane region" description="Helical" evidence="2">
    <location>
        <begin position="316"/>
        <end position="336"/>
    </location>
</feature>
<keyword id="KW-1003">Cell membrane</keyword>
<keyword id="KW-0472">Membrane</keyword>
<keyword id="KW-1185">Reference proteome</keyword>
<keyword id="KW-0812">Transmembrane</keyword>
<keyword id="KW-1133">Transmembrane helix</keyword>
<keyword id="KW-0813">Transport</keyword>
<dbReference type="EMBL" id="CP000253">
    <property type="protein sequence ID" value="ABD31650.1"/>
    <property type="molecule type" value="Genomic_DNA"/>
</dbReference>
<dbReference type="RefSeq" id="WP_000761395.1">
    <property type="nucleotide sequence ID" value="NZ_LS483365.1"/>
</dbReference>
<dbReference type="RefSeq" id="YP_501104.1">
    <property type="nucleotide sequence ID" value="NC_007795.1"/>
</dbReference>
<dbReference type="SMR" id="Q2FVR0"/>
<dbReference type="STRING" id="93061.SAOUHSC_02641"/>
<dbReference type="PaxDb" id="1280-SAXN108_2612"/>
<dbReference type="GeneID" id="3921418"/>
<dbReference type="KEGG" id="sao:SAOUHSC_02641"/>
<dbReference type="PATRIC" id="fig|93061.5.peg.2389"/>
<dbReference type="eggNOG" id="COG0577">
    <property type="taxonomic scope" value="Bacteria"/>
</dbReference>
<dbReference type="HOGENOM" id="CLU_060907_1_0_9"/>
<dbReference type="OrthoDB" id="384327at2"/>
<dbReference type="PRO" id="PR:Q2FVR0"/>
<dbReference type="Proteomes" id="UP000008816">
    <property type="component" value="Chromosome"/>
</dbReference>
<dbReference type="GO" id="GO:0005886">
    <property type="term" value="C:plasma membrane"/>
    <property type="evidence" value="ECO:0007669"/>
    <property type="project" value="UniProtKB-SubCell"/>
</dbReference>
<dbReference type="InterPro" id="IPR051125">
    <property type="entry name" value="ABC-4/HrtB_transporter"/>
</dbReference>
<dbReference type="InterPro" id="IPR003838">
    <property type="entry name" value="ABC3_permease_C"/>
</dbReference>
<dbReference type="PANTHER" id="PTHR43738">
    <property type="entry name" value="ABC TRANSPORTER, MEMBRANE PROTEIN"/>
    <property type="match status" value="1"/>
</dbReference>
<dbReference type="PANTHER" id="PTHR43738:SF1">
    <property type="entry name" value="HEMIN TRANSPORT SYSTEM PERMEASE PROTEIN HRTB-RELATED"/>
    <property type="match status" value="1"/>
</dbReference>
<dbReference type="Pfam" id="PF02687">
    <property type="entry name" value="FtsX"/>
    <property type="match status" value="1"/>
</dbReference>
<sequence>MKLAIKEIMFYKFRYILITLIILLLSIMVLFISGLAQGLGRENISLFEHFDNDEYVVQKMKEPQIEKSQLSDTQQNQIKKVIHQEPYKMNIQTLKLSNKEQDVITMNDVKQQRIQLKKGDYPKNAHEVAINDKLAADNIRVGDRLHFKNNSTSYRVSGILNDTMYAHSSIVLLNDNGFNALNKVNTAFYPVKNLTQQQRDELNKINDVQVVSEKDLTGNIASYQAEQAPLNMMIVSLFAITAIVLSAFFYVMTIQKISQIGILKAIGIKTRHLLSALVLQILTLTIIGVGIAVIIIVGLSFMMPVTMPFYLTTQNILLMVGIFILVAILGASLSFIKLFKVDPIEAIGGAE</sequence>
<organism>
    <name type="scientific">Staphylococcus aureus (strain NCTC 8325 / PS 47)</name>
    <dbReference type="NCBI Taxonomy" id="93061"/>
    <lineage>
        <taxon>Bacteria</taxon>
        <taxon>Bacillati</taxon>
        <taxon>Bacillota</taxon>
        <taxon>Bacilli</taxon>
        <taxon>Bacillales</taxon>
        <taxon>Staphylococcaceae</taxon>
        <taxon>Staphylococcus</taxon>
    </lineage>
</organism>
<comment type="function">
    <text evidence="1">Part of the ABC transporter complex hrt involved in hemin import. Responsible for the translocation of the substrate across the membrane (By similarity).</text>
</comment>
<comment type="subunit">
    <text evidence="1">The complex is composed of two ATP-binding proteins (HrtA), two transmembrane proteins (HrtB) and a solute-binding protein.</text>
</comment>
<comment type="subcellular location">
    <subcellularLocation>
        <location evidence="3">Cell membrane</location>
        <topology evidence="3">Multi-pass membrane protein</topology>
    </subcellularLocation>
</comment>
<comment type="similarity">
    <text evidence="3">Belongs to the ABC-4 integral membrane protein family. HrtB subfamily.</text>
</comment>
<proteinExistence type="inferred from homology"/>
<evidence type="ECO:0000250" key="1"/>
<evidence type="ECO:0000255" key="2"/>
<evidence type="ECO:0000305" key="3"/>
<gene>
    <name type="primary">hrtB</name>
    <name type="ordered locus">SAOUHSC_02641</name>
</gene>
<protein>
    <recommendedName>
        <fullName>Putative hemin transport system permease protein HrtB</fullName>
    </recommendedName>
</protein>